<organism evidence="5">
    <name type="scientific">Aliivibrio fischeri (strain ATCC 700601 / ES114)</name>
    <name type="common">Vibrio fischeri</name>
    <dbReference type="NCBI Taxonomy" id="312309"/>
    <lineage>
        <taxon>Bacteria</taxon>
        <taxon>Pseudomonadati</taxon>
        <taxon>Pseudomonadota</taxon>
        <taxon>Gammaproteobacteria</taxon>
        <taxon>Vibrionales</taxon>
        <taxon>Vibrionaceae</taxon>
        <taxon>Aliivibrio</taxon>
    </lineage>
</organism>
<gene>
    <name evidence="2" type="primary">tfoX1</name>
    <name evidence="5" type="synonym">sxy1</name>
    <name evidence="3" type="synonym">tfoX</name>
    <name type="ordered locus">VF_0896</name>
</gene>
<comment type="function">
    <text evidence="1">Required for DNA transformation jointly with TfoY (tfoX2).</text>
</comment>
<comment type="induction">
    <text evidence="1">By chitin oligosaccharides, but not with polymeric chitin or chitin monomers.</text>
</comment>
<comment type="disruption phenotype">
    <text evidence="1">Defective in DNA transformation.</text>
</comment>
<comment type="similarity">
    <text evidence="4">Belongs to the Sxy/TfoX family.</text>
</comment>
<dbReference type="EMBL" id="CP000020">
    <property type="protein sequence ID" value="AAW85391.1"/>
    <property type="molecule type" value="Genomic_DNA"/>
</dbReference>
<dbReference type="RefSeq" id="WP_011261559.1">
    <property type="nucleotide sequence ID" value="NC_006840.2"/>
</dbReference>
<dbReference type="RefSeq" id="YP_204279.1">
    <property type="nucleotide sequence ID" value="NC_006840.2"/>
</dbReference>
<dbReference type="SMR" id="Q5E6F5"/>
<dbReference type="STRING" id="312309.VF_0896"/>
<dbReference type="EnsemblBacteria" id="AAW85391">
    <property type="protein sequence ID" value="AAW85391"/>
    <property type="gene ID" value="VF_0896"/>
</dbReference>
<dbReference type="GeneID" id="54163564"/>
<dbReference type="KEGG" id="vfi:VF_0896"/>
<dbReference type="PATRIC" id="fig|312309.11.peg.892"/>
<dbReference type="eggNOG" id="COG3070">
    <property type="taxonomic scope" value="Bacteria"/>
</dbReference>
<dbReference type="HOGENOM" id="CLU_094990_1_0_6"/>
<dbReference type="OrthoDB" id="4225809at2"/>
<dbReference type="Proteomes" id="UP000000537">
    <property type="component" value="Chromosome I"/>
</dbReference>
<dbReference type="GO" id="GO:0009290">
    <property type="term" value="P:DNA import into cell involved in transformation"/>
    <property type="evidence" value="ECO:0000315"/>
    <property type="project" value="UniProtKB"/>
</dbReference>
<dbReference type="GO" id="GO:0030420">
    <property type="term" value="P:establishment of competence for transformation"/>
    <property type="evidence" value="ECO:0000315"/>
    <property type="project" value="UniProtKB"/>
</dbReference>
<dbReference type="Gene3D" id="1.10.150.20">
    <property type="entry name" value="5' to 3' exonuclease, C-terminal subdomain"/>
    <property type="match status" value="1"/>
</dbReference>
<dbReference type="Gene3D" id="3.30.1460.30">
    <property type="entry name" value="YgaC/TfoX-N like chaperone"/>
    <property type="match status" value="1"/>
</dbReference>
<dbReference type="InterPro" id="IPR047525">
    <property type="entry name" value="TfoX-like"/>
</dbReference>
<dbReference type="InterPro" id="IPR026256">
    <property type="entry name" value="TfoX-like_gammaprotbact"/>
</dbReference>
<dbReference type="InterPro" id="IPR007077">
    <property type="entry name" value="TfoX_C"/>
</dbReference>
<dbReference type="InterPro" id="IPR007076">
    <property type="entry name" value="TfoX_N"/>
</dbReference>
<dbReference type="PANTHER" id="PTHR36121">
    <property type="entry name" value="PROTEIN SXY"/>
    <property type="match status" value="1"/>
</dbReference>
<dbReference type="PANTHER" id="PTHR36121:SF1">
    <property type="entry name" value="PROTEIN SXY"/>
    <property type="match status" value="1"/>
</dbReference>
<dbReference type="Pfam" id="PF04994">
    <property type="entry name" value="TfoX_C"/>
    <property type="match status" value="1"/>
</dbReference>
<dbReference type="Pfam" id="PF04993">
    <property type="entry name" value="TfoX_N"/>
    <property type="match status" value="1"/>
</dbReference>
<dbReference type="PIRSF" id="PIRSF028788">
    <property type="entry name" value="TfoX_Sxy"/>
    <property type="match status" value="1"/>
</dbReference>
<dbReference type="SUPFAM" id="SSF159894">
    <property type="entry name" value="YgaC/TfoX-N like"/>
    <property type="match status" value="1"/>
</dbReference>
<keyword id="KW-0178">Competence</keyword>
<keyword id="KW-1185">Reference proteome</keyword>
<accession>Q5E6F5</accession>
<proteinExistence type="evidence at transcript level"/>
<protein>
    <recommendedName>
        <fullName evidence="5">DNA transformation protein TfoX1</fullName>
    </recommendedName>
</protein>
<sequence length="209" mass="23869">MTGTGDVNLKIKEIEMSHLEERFFNFVKKLGRFNKRSMFGGVGLFNEDAMFSLVTDGRLYVRGGGEVDARFEELGCERFKHVKKTTIATVNYFDVTELFEKKPASLLSIVQEAMENSRLEREFKKSKENRRLRDLPNMQLTLERMVKKAGVPDVDSFLEIGAVDVFKKVNHTYGGDVDVKLLWKFAGAESGVHWTLLQEPAKQALLQQV</sequence>
<reference evidence="5" key="1">
    <citation type="journal article" date="2005" name="Proc. Natl. Acad. Sci. U.S.A.">
        <title>Complete genome sequence of Vibrio fischeri: a symbiotic bacterium with pathogenic congeners.</title>
        <authorList>
            <person name="Ruby E.G."/>
            <person name="Urbanowski M."/>
            <person name="Campbell J."/>
            <person name="Dunn A."/>
            <person name="Faini M."/>
            <person name="Gunsalus R."/>
            <person name="Lostroh P."/>
            <person name="Lupp C."/>
            <person name="McCann J."/>
            <person name="Millikan D."/>
            <person name="Schaefer A."/>
            <person name="Stabb E."/>
            <person name="Stevens A."/>
            <person name="Visick K."/>
            <person name="Whistler C."/>
            <person name="Greenberg E.P."/>
        </authorList>
    </citation>
    <scope>NUCLEOTIDE SEQUENCE [LARGE SCALE GENOMIC DNA]</scope>
    <source>
        <strain evidence="6">ATCC 700601 / ES114</strain>
    </source>
</reference>
<reference key="2">
    <citation type="journal article" date="2010" name="Environ. Microbiol.">
        <title>Natural transformation of Vibrio fischeri requires tfoX and tfoY.</title>
        <authorList>
            <person name="Pollack-Berti A."/>
            <person name="Wollenberg M.S."/>
            <person name="Ruby E.G."/>
        </authorList>
    </citation>
    <scope>IDENTIFICATION</scope>
    <scope>FUNCTION</scope>
    <scope>INDUCTION</scope>
    <scope>DISRUPTION PHENOTYPE</scope>
    <source>
        <strain evidence="3">ATCC 700601 / ES114</strain>
    </source>
</reference>
<feature type="chain" id="PRO_0000432588" description="DNA transformation protein TfoX1">
    <location>
        <begin position="1"/>
        <end position="209"/>
    </location>
</feature>
<evidence type="ECO:0000269" key="1">
    <source>
    </source>
</evidence>
<evidence type="ECO:0000303" key="2">
    <source>
    </source>
</evidence>
<evidence type="ECO:0000303" key="3">
    <source>
    </source>
</evidence>
<evidence type="ECO:0000305" key="4"/>
<evidence type="ECO:0000312" key="5">
    <source>
        <dbReference type="EMBL" id="AAW85391.1"/>
    </source>
</evidence>
<evidence type="ECO:0000312" key="6">
    <source>
        <dbReference type="Proteomes" id="UP000000537"/>
    </source>
</evidence>
<name>TFOX_ALIF1</name>